<keyword id="KW-0173">Coenzyme A biosynthesis</keyword>
<keyword id="KW-0342">GTP-binding</keyword>
<keyword id="KW-0418">Kinase</keyword>
<keyword id="KW-0547">Nucleotide-binding</keyword>
<keyword id="KW-1185">Reference proteome</keyword>
<keyword id="KW-0808">Transferase</keyword>
<organism>
    <name type="scientific">Methanocorpusculum labreanum (strain ATCC 43576 / DSM 4855 / Z)</name>
    <dbReference type="NCBI Taxonomy" id="410358"/>
    <lineage>
        <taxon>Archaea</taxon>
        <taxon>Methanobacteriati</taxon>
        <taxon>Methanobacteriota</taxon>
        <taxon>Stenosarchaea group</taxon>
        <taxon>Methanomicrobia</taxon>
        <taxon>Methanomicrobiales</taxon>
        <taxon>Methanocorpusculaceae</taxon>
        <taxon>Methanocorpusculum</taxon>
    </lineage>
</organism>
<feature type="chain" id="PRO_0000380056" description="GTP-dependent dephospho-CoA kinase">
    <location>
        <begin position="1"/>
        <end position="161"/>
    </location>
</feature>
<feature type="binding site" evidence="1">
    <location>
        <position position="40"/>
    </location>
    <ligand>
        <name>GTP</name>
        <dbReference type="ChEBI" id="CHEBI:37565"/>
    </ligand>
</feature>
<feature type="binding site" evidence="1">
    <location>
        <position position="41"/>
    </location>
    <ligand>
        <name>GTP</name>
        <dbReference type="ChEBI" id="CHEBI:37565"/>
    </ligand>
</feature>
<feature type="binding site" evidence="1">
    <location>
        <position position="42"/>
    </location>
    <ligand>
        <name>GTP</name>
        <dbReference type="ChEBI" id="CHEBI:37565"/>
    </ligand>
</feature>
<feature type="binding site" evidence="1">
    <location>
        <position position="59"/>
    </location>
    <ligand>
        <name>GTP</name>
        <dbReference type="ChEBI" id="CHEBI:37565"/>
    </ligand>
</feature>
<feature type="binding site" evidence="1">
    <location>
        <position position="112"/>
    </location>
    <ligand>
        <name>GTP</name>
        <dbReference type="ChEBI" id="CHEBI:37565"/>
    </ligand>
</feature>
<feature type="binding site" evidence="1">
    <location>
        <position position="135"/>
    </location>
    <ligand>
        <name>GTP</name>
        <dbReference type="ChEBI" id="CHEBI:37565"/>
    </ligand>
</feature>
<sequence length="161" mass="17667">MLTLPPENRWLFREPFGTVFSDFSMVLPYIEGKIFCTVGDVVTHNALSAGLIPSIGVIDGFTKRSPYLKMPEIQGHILHVTNPAGTITDELIAALRLAMDEIPCVVMVNGEEDLAVLPLTEILPDGAVILYGQPEEGLVICEVNKQLRANAKKLLTYFVSL</sequence>
<name>DPCKG_METLZ</name>
<reference key="1">
    <citation type="journal article" date="2009" name="Stand. Genomic Sci.">
        <title>Complete genome sequence of Methanocorpusculum labreanum type strain Z.</title>
        <authorList>
            <person name="Anderson I.J."/>
            <person name="Sieprawska-Lupa M."/>
            <person name="Goltsman E."/>
            <person name="Lapidus A."/>
            <person name="Copeland A."/>
            <person name="Glavina Del Rio T."/>
            <person name="Tice H."/>
            <person name="Dalin E."/>
            <person name="Barry K."/>
            <person name="Pitluck S."/>
            <person name="Hauser L."/>
            <person name="Land M."/>
            <person name="Lucas S."/>
            <person name="Richardson P."/>
            <person name="Whitman W.B."/>
            <person name="Kyrpides N.C."/>
        </authorList>
    </citation>
    <scope>NUCLEOTIDE SEQUENCE [LARGE SCALE GENOMIC DNA]</scope>
    <source>
        <strain>ATCC 43576 / DSM 4855 / Z</strain>
    </source>
</reference>
<protein>
    <recommendedName>
        <fullName evidence="1">GTP-dependent dephospho-CoA kinase</fullName>
        <ecNumber evidence="1">2.7.1.237</ecNumber>
    </recommendedName>
    <alternativeName>
        <fullName evidence="1">Dephospho-coenzyme A kinase</fullName>
        <shortName evidence="1">DPCK</shortName>
    </alternativeName>
</protein>
<proteinExistence type="inferred from homology"/>
<gene>
    <name type="ordered locus">Mlab_0656</name>
</gene>
<comment type="function">
    <text evidence="1">Catalyzes the GTP-dependent phosphorylation of the 3'-hydroxyl group of dephosphocoenzyme A to form coenzyme A (CoA).</text>
</comment>
<comment type="catalytic activity">
    <reaction evidence="1">
        <text>3'-dephospho-CoA + GTP = GDP + CoA + H(+)</text>
        <dbReference type="Rhea" id="RHEA:61156"/>
        <dbReference type="ChEBI" id="CHEBI:15378"/>
        <dbReference type="ChEBI" id="CHEBI:37565"/>
        <dbReference type="ChEBI" id="CHEBI:57287"/>
        <dbReference type="ChEBI" id="CHEBI:57328"/>
        <dbReference type="ChEBI" id="CHEBI:58189"/>
        <dbReference type="EC" id="2.7.1.237"/>
    </reaction>
</comment>
<comment type="pathway">
    <text evidence="1">Cofactor biosynthesis; coenzyme A biosynthesis.</text>
</comment>
<comment type="similarity">
    <text evidence="1">Belongs to the GTP-dependent DPCK family.</text>
</comment>
<evidence type="ECO:0000255" key="1">
    <source>
        <dbReference type="HAMAP-Rule" id="MF_00590"/>
    </source>
</evidence>
<dbReference type="EC" id="2.7.1.237" evidence="1"/>
<dbReference type="EMBL" id="CP000559">
    <property type="protein sequence ID" value="ABN06829.1"/>
    <property type="molecule type" value="Genomic_DNA"/>
</dbReference>
<dbReference type="RefSeq" id="WP_011833030.1">
    <property type="nucleotide sequence ID" value="NC_008942.1"/>
</dbReference>
<dbReference type="SMR" id="A2SR73"/>
<dbReference type="STRING" id="410358.Mlab_0656"/>
<dbReference type="GeneID" id="4795571"/>
<dbReference type="KEGG" id="mla:Mlab_0656"/>
<dbReference type="eggNOG" id="arCOG04076">
    <property type="taxonomic scope" value="Archaea"/>
</dbReference>
<dbReference type="HOGENOM" id="CLU_120795_1_0_2"/>
<dbReference type="OrthoDB" id="15447at2157"/>
<dbReference type="UniPathway" id="UPA00241"/>
<dbReference type="Proteomes" id="UP000000365">
    <property type="component" value="Chromosome"/>
</dbReference>
<dbReference type="GO" id="GO:0005525">
    <property type="term" value="F:GTP binding"/>
    <property type="evidence" value="ECO:0007669"/>
    <property type="project" value="UniProtKB-UniRule"/>
</dbReference>
<dbReference type="GO" id="GO:0016301">
    <property type="term" value="F:kinase activity"/>
    <property type="evidence" value="ECO:0007669"/>
    <property type="project" value="UniProtKB-UniRule"/>
</dbReference>
<dbReference type="GO" id="GO:0015937">
    <property type="term" value="P:coenzyme A biosynthetic process"/>
    <property type="evidence" value="ECO:0007669"/>
    <property type="project" value="UniProtKB-UniRule"/>
</dbReference>
<dbReference type="HAMAP" id="MF_00590">
    <property type="entry name" value="Dephospho_CoA_kinase_GTP_dep"/>
    <property type="match status" value="1"/>
</dbReference>
<dbReference type="InterPro" id="IPR007164">
    <property type="entry name" value="GTP-dep_dephospho-CoA_kin"/>
</dbReference>
<dbReference type="PANTHER" id="PTHR40732:SF1">
    <property type="entry name" value="GTP-DEPENDENT DEPHOSPHO-COA KINASE"/>
    <property type="match status" value="1"/>
</dbReference>
<dbReference type="PANTHER" id="PTHR40732">
    <property type="entry name" value="UPF0218 PROTEIN TK1697"/>
    <property type="match status" value="1"/>
</dbReference>
<dbReference type="Pfam" id="PF04019">
    <property type="entry name" value="DUF359"/>
    <property type="match status" value="1"/>
</dbReference>
<dbReference type="PIRSF" id="PIRSF006533">
    <property type="entry name" value="UCP006533"/>
    <property type="match status" value="1"/>
</dbReference>
<accession>A2SR73</accession>